<name>TRPD_HELPS</name>
<sequence length="335" mass="36601">MKEILNALYHQKDLNDGEVKKLFTLIINEKVSPAQLGAVLCALKIKGESFKEISVAATTLLEHAPKPFDSGLDLIDNCGTGGDGLKTINISTIAALIASSMGLSMAKHGSRSVSSHSGSADLLENLGVNIEMNPTQLENCFKQTHFGFLFAPLYHQSFKKSAPLRKELFTKTIFNCLGPLINPLRPKIQLLGVYEKSLCKTMALALKALGVKRAMVVNGGGTDEIVLHDTTHACELKNNGILEYDLSAKDFDLPPYDLKELQIKNAQESVQACLDILENKGKDSHTMVVVANVASLLYLSHKAKDLKEGVGMTLEHLKTKVPYTHLQKIIRLSHA</sequence>
<gene>
    <name evidence="1" type="primary">trpD</name>
    <name type="ordered locus">HPSH_06630</name>
</gene>
<keyword id="KW-0028">Amino-acid biosynthesis</keyword>
<keyword id="KW-0057">Aromatic amino acid biosynthesis</keyword>
<keyword id="KW-0328">Glycosyltransferase</keyword>
<keyword id="KW-0460">Magnesium</keyword>
<keyword id="KW-0479">Metal-binding</keyword>
<keyword id="KW-0808">Transferase</keyword>
<keyword id="KW-0822">Tryptophan biosynthesis</keyword>
<reference key="1">
    <citation type="submission" date="2008-05" db="EMBL/GenBank/DDBJ databases">
        <title>Genome sequence of Helicobacter pylori from the remote Amazon: traces of Asian ancestry of the first Americans.</title>
        <authorList>
            <person name="Kersulyte D."/>
            <person name="Kalia A."/>
            <person name="Gilman R.H."/>
            <person name="Berg D.E."/>
        </authorList>
    </citation>
    <scope>NUCLEOTIDE SEQUENCE [LARGE SCALE GENOMIC DNA]</scope>
    <source>
        <strain>Shi470</strain>
    </source>
</reference>
<evidence type="ECO:0000255" key="1">
    <source>
        <dbReference type="HAMAP-Rule" id="MF_00211"/>
    </source>
</evidence>
<dbReference type="EC" id="2.4.2.18" evidence="1"/>
<dbReference type="EMBL" id="CP001072">
    <property type="protein sequence ID" value="ACD48726.1"/>
    <property type="molecule type" value="Genomic_DNA"/>
</dbReference>
<dbReference type="RefSeq" id="WP_000658951.1">
    <property type="nucleotide sequence ID" value="NC_010698.2"/>
</dbReference>
<dbReference type="SMR" id="B2UV44"/>
<dbReference type="KEGG" id="hps:HPSH_06630"/>
<dbReference type="HOGENOM" id="CLU_034315_2_1_7"/>
<dbReference type="UniPathway" id="UPA00035">
    <property type="reaction ID" value="UER00041"/>
</dbReference>
<dbReference type="GO" id="GO:0005829">
    <property type="term" value="C:cytosol"/>
    <property type="evidence" value="ECO:0007669"/>
    <property type="project" value="TreeGrafter"/>
</dbReference>
<dbReference type="GO" id="GO:0004048">
    <property type="term" value="F:anthranilate phosphoribosyltransferase activity"/>
    <property type="evidence" value="ECO:0007669"/>
    <property type="project" value="UniProtKB-UniRule"/>
</dbReference>
<dbReference type="GO" id="GO:0000287">
    <property type="term" value="F:magnesium ion binding"/>
    <property type="evidence" value="ECO:0007669"/>
    <property type="project" value="UniProtKB-UniRule"/>
</dbReference>
<dbReference type="GO" id="GO:0000162">
    <property type="term" value="P:L-tryptophan biosynthetic process"/>
    <property type="evidence" value="ECO:0007669"/>
    <property type="project" value="UniProtKB-UniRule"/>
</dbReference>
<dbReference type="FunFam" id="3.40.1030.10:FF:000002">
    <property type="entry name" value="Anthranilate phosphoribosyltransferase"/>
    <property type="match status" value="1"/>
</dbReference>
<dbReference type="Gene3D" id="3.40.1030.10">
    <property type="entry name" value="Nucleoside phosphorylase/phosphoribosyltransferase catalytic domain"/>
    <property type="match status" value="1"/>
</dbReference>
<dbReference type="Gene3D" id="1.20.970.10">
    <property type="entry name" value="Transferase, Pyrimidine Nucleoside Phosphorylase, Chain C"/>
    <property type="match status" value="1"/>
</dbReference>
<dbReference type="HAMAP" id="MF_00211">
    <property type="entry name" value="TrpD"/>
    <property type="match status" value="1"/>
</dbReference>
<dbReference type="InterPro" id="IPR005940">
    <property type="entry name" value="Anthranilate_Pribosyl_Tfrase"/>
</dbReference>
<dbReference type="InterPro" id="IPR000312">
    <property type="entry name" value="Glycosyl_Trfase_fam3"/>
</dbReference>
<dbReference type="InterPro" id="IPR017459">
    <property type="entry name" value="Glycosyl_Trfase_fam3_N_dom"/>
</dbReference>
<dbReference type="InterPro" id="IPR036320">
    <property type="entry name" value="Glycosyl_Trfase_fam3_N_dom_sf"/>
</dbReference>
<dbReference type="InterPro" id="IPR035902">
    <property type="entry name" value="Nuc_phospho_transferase"/>
</dbReference>
<dbReference type="NCBIfam" id="TIGR01245">
    <property type="entry name" value="trpD"/>
    <property type="match status" value="1"/>
</dbReference>
<dbReference type="PANTHER" id="PTHR43285">
    <property type="entry name" value="ANTHRANILATE PHOSPHORIBOSYLTRANSFERASE"/>
    <property type="match status" value="1"/>
</dbReference>
<dbReference type="PANTHER" id="PTHR43285:SF2">
    <property type="entry name" value="ANTHRANILATE PHOSPHORIBOSYLTRANSFERASE"/>
    <property type="match status" value="1"/>
</dbReference>
<dbReference type="Pfam" id="PF02885">
    <property type="entry name" value="Glycos_trans_3N"/>
    <property type="match status" value="1"/>
</dbReference>
<dbReference type="Pfam" id="PF00591">
    <property type="entry name" value="Glycos_transf_3"/>
    <property type="match status" value="1"/>
</dbReference>
<dbReference type="SUPFAM" id="SSF52418">
    <property type="entry name" value="Nucleoside phosphorylase/phosphoribosyltransferase catalytic domain"/>
    <property type="match status" value="1"/>
</dbReference>
<dbReference type="SUPFAM" id="SSF47648">
    <property type="entry name" value="Nucleoside phosphorylase/phosphoribosyltransferase N-terminal domain"/>
    <property type="match status" value="1"/>
</dbReference>
<accession>B2UV44</accession>
<comment type="function">
    <text evidence="1">Catalyzes the transfer of the phosphoribosyl group of 5-phosphorylribose-1-pyrophosphate (PRPP) to anthranilate to yield N-(5'-phosphoribosyl)-anthranilate (PRA).</text>
</comment>
<comment type="catalytic activity">
    <reaction evidence="1">
        <text>N-(5-phospho-beta-D-ribosyl)anthranilate + diphosphate = 5-phospho-alpha-D-ribose 1-diphosphate + anthranilate</text>
        <dbReference type="Rhea" id="RHEA:11768"/>
        <dbReference type="ChEBI" id="CHEBI:16567"/>
        <dbReference type="ChEBI" id="CHEBI:18277"/>
        <dbReference type="ChEBI" id="CHEBI:33019"/>
        <dbReference type="ChEBI" id="CHEBI:58017"/>
        <dbReference type="EC" id="2.4.2.18"/>
    </reaction>
</comment>
<comment type="cofactor">
    <cofactor evidence="1">
        <name>Mg(2+)</name>
        <dbReference type="ChEBI" id="CHEBI:18420"/>
    </cofactor>
    <text evidence="1">Binds 2 magnesium ions per monomer.</text>
</comment>
<comment type="pathway">
    <text evidence="1">Amino-acid biosynthesis; L-tryptophan biosynthesis; L-tryptophan from chorismate: step 2/5.</text>
</comment>
<comment type="subunit">
    <text evidence="1">Homodimer.</text>
</comment>
<comment type="similarity">
    <text evidence="1">Belongs to the anthranilate phosphoribosyltransferase family.</text>
</comment>
<organism>
    <name type="scientific">Helicobacter pylori (strain Shi470)</name>
    <dbReference type="NCBI Taxonomy" id="512562"/>
    <lineage>
        <taxon>Bacteria</taxon>
        <taxon>Pseudomonadati</taxon>
        <taxon>Campylobacterota</taxon>
        <taxon>Epsilonproteobacteria</taxon>
        <taxon>Campylobacterales</taxon>
        <taxon>Helicobacteraceae</taxon>
        <taxon>Helicobacter</taxon>
    </lineage>
</organism>
<feature type="chain" id="PRO_1000099812" description="Anthranilate phosphoribosyltransferase">
    <location>
        <begin position="1"/>
        <end position="335"/>
    </location>
</feature>
<feature type="binding site" evidence="1">
    <location>
        <position position="79"/>
    </location>
    <ligand>
        <name>5-phospho-alpha-D-ribose 1-diphosphate</name>
        <dbReference type="ChEBI" id="CHEBI:58017"/>
    </ligand>
</feature>
<feature type="binding site" evidence="1">
    <location>
        <position position="79"/>
    </location>
    <ligand>
        <name>anthranilate</name>
        <dbReference type="ChEBI" id="CHEBI:16567"/>
        <label>1</label>
    </ligand>
</feature>
<feature type="binding site" evidence="1">
    <location>
        <begin position="82"/>
        <end position="83"/>
    </location>
    <ligand>
        <name>5-phospho-alpha-D-ribose 1-diphosphate</name>
        <dbReference type="ChEBI" id="CHEBI:58017"/>
    </ligand>
</feature>
<feature type="binding site" evidence="1">
    <location>
        <position position="87"/>
    </location>
    <ligand>
        <name>5-phospho-alpha-D-ribose 1-diphosphate</name>
        <dbReference type="ChEBI" id="CHEBI:58017"/>
    </ligand>
</feature>
<feature type="binding site" evidence="1">
    <location>
        <begin position="89"/>
        <end position="92"/>
    </location>
    <ligand>
        <name>5-phospho-alpha-D-ribose 1-diphosphate</name>
        <dbReference type="ChEBI" id="CHEBI:58017"/>
    </ligand>
</feature>
<feature type="binding site" evidence="1">
    <location>
        <position position="91"/>
    </location>
    <ligand>
        <name>Mg(2+)</name>
        <dbReference type="ChEBI" id="CHEBI:18420"/>
        <label>1</label>
    </ligand>
</feature>
<feature type="binding site" evidence="1">
    <location>
        <begin position="107"/>
        <end position="115"/>
    </location>
    <ligand>
        <name>5-phospho-alpha-D-ribose 1-diphosphate</name>
        <dbReference type="ChEBI" id="CHEBI:58017"/>
    </ligand>
</feature>
<feature type="binding site" evidence="1">
    <location>
        <position position="119"/>
    </location>
    <ligand>
        <name>5-phospho-alpha-D-ribose 1-diphosphate</name>
        <dbReference type="ChEBI" id="CHEBI:58017"/>
    </ligand>
</feature>
<feature type="binding site" evidence="1">
    <location>
        <position position="165"/>
    </location>
    <ligand>
        <name>anthranilate</name>
        <dbReference type="ChEBI" id="CHEBI:16567"/>
        <label>2</label>
    </ligand>
</feature>
<feature type="binding site" evidence="1">
    <location>
        <position position="223"/>
    </location>
    <ligand>
        <name>Mg(2+)</name>
        <dbReference type="ChEBI" id="CHEBI:18420"/>
        <label>2</label>
    </ligand>
</feature>
<feature type="binding site" evidence="1">
    <location>
        <position position="224"/>
    </location>
    <ligand>
        <name>Mg(2+)</name>
        <dbReference type="ChEBI" id="CHEBI:18420"/>
        <label>1</label>
    </ligand>
</feature>
<feature type="binding site" evidence="1">
    <location>
        <position position="224"/>
    </location>
    <ligand>
        <name>Mg(2+)</name>
        <dbReference type="ChEBI" id="CHEBI:18420"/>
        <label>2</label>
    </ligand>
</feature>
<proteinExistence type="inferred from homology"/>
<protein>
    <recommendedName>
        <fullName evidence="1">Anthranilate phosphoribosyltransferase</fullName>
        <ecNumber evidence="1">2.4.2.18</ecNumber>
    </recommendedName>
</protein>